<gene>
    <name evidence="1" type="primary">dnaK</name>
    <name type="ordered locus">Rsph17029_2835</name>
</gene>
<evidence type="ECO:0000255" key="1">
    <source>
        <dbReference type="HAMAP-Rule" id="MF_00332"/>
    </source>
</evidence>
<evidence type="ECO:0000256" key="2">
    <source>
        <dbReference type="SAM" id="MobiDB-lite"/>
    </source>
</evidence>
<keyword id="KW-0067">ATP-binding</keyword>
<keyword id="KW-0143">Chaperone</keyword>
<keyword id="KW-0547">Nucleotide-binding</keyword>
<keyword id="KW-0597">Phosphoprotein</keyword>
<keyword id="KW-0346">Stress response</keyword>
<reference key="1">
    <citation type="submission" date="2007-02" db="EMBL/GenBank/DDBJ databases">
        <title>Complete sequence of chromosome 1 of Rhodobacter sphaeroides ATCC 17029.</title>
        <authorList>
            <person name="Copeland A."/>
            <person name="Lucas S."/>
            <person name="Lapidus A."/>
            <person name="Barry K."/>
            <person name="Detter J.C."/>
            <person name="Glavina del Rio T."/>
            <person name="Hammon N."/>
            <person name="Israni S."/>
            <person name="Dalin E."/>
            <person name="Tice H."/>
            <person name="Pitluck S."/>
            <person name="Kiss H."/>
            <person name="Brettin T."/>
            <person name="Bruce D."/>
            <person name="Han C."/>
            <person name="Tapia R."/>
            <person name="Gilna P."/>
            <person name="Schmutz J."/>
            <person name="Larimer F."/>
            <person name="Land M."/>
            <person name="Hauser L."/>
            <person name="Kyrpides N."/>
            <person name="Mikhailova N."/>
            <person name="Richardson P."/>
            <person name="Mackenzie C."/>
            <person name="Choudhary M."/>
            <person name="Donohue T.J."/>
            <person name="Kaplan S."/>
        </authorList>
    </citation>
    <scope>NUCLEOTIDE SEQUENCE [LARGE SCALE GENOMIC DNA]</scope>
    <source>
        <strain>ATCC 17029 / ATH 2.4.9</strain>
    </source>
</reference>
<sequence>MAKVIGIDLGTTNSCVAIMDGAQPRVIENSEGARTTPSIVGFTDSERLVGQPAKRQAVTNPSNTVFAVKRLIGRRVGDAEVEKDKKLVPYSIVNGGNGDAWVEVRGEKYSPSQISAFILQKMKETAEAYLGETVTQAVITVPAYFNDAQRQATKDAGKIAGLEVLRIINEPTAAALAYGLDKKDTKTIAVYDLGGGTFDITILEIDDGLFEVKSTNGDTFLGGEDFDMRIVNYLADEFKKEHGVDLTLDKMALQRLKEAAEKAKIELSSSQQTEINQPFISMDRNTGQPLHMVMKLTRAKLESLVGDLIKKSLKPCEAALKDAGVSKSDIDEVVLVGGMTRMPRVVEEVTKFFGKEPHKGVNPDEVVALGAAIQAGVLQGDVKDVVLLDVTPLSLGIETLGGVFTRLIDRNTTIPTKKSQVFSTAEDNQNAVTIRVFQGEREMAADNKLLGQFNLEDIPPAPRGMPQIEVTFDIDANGIVSVSAKDKGTGKSQNITIQASGGLSDEDIEKMVRDAEANAEADKKRRELVETKNQGESLLHSTRKSIEEHGDKVDPSTVEAIELAMGALEEALKSEDAGKIKGGIQNLTEAAMRLGEAIYKASQAEGGATPDEEGPRSVDDDIVDADFEDLGENKRK</sequence>
<comment type="function">
    <text evidence="1">Acts as a chaperone.</text>
</comment>
<comment type="induction">
    <text evidence="1">By stress conditions e.g. heat shock.</text>
</comment>
<comment type="similarity">
    <text evidence="1">Belongs to the heat shock protein 70 family.</text>
</comment>
<protein>
    <recommendedName>
        <fullName evidence="1">Chaperone protein DnaK</fullName>
    </recommendedName>
    <alternativeName>
        <fullName evidence="1">HSP70</fullName>
    </alternativeName>
    <alternativeName>
        <fullName evidence="1">Heat shock 70 kDa protein</fullName>
    </alternativeName>
    <alternativeName>
        <fullName evidence="1">Heat shock protein 70</fullName>
    </alternativeName>
</protein>
<accession>A3PNM1</accession>
<feature type="chain" id="PRO_1000059648" description="Chaperone protein DnaK">
    <location>
        <begin position="1"/>
        <end position="636"/>
    </location>
</feature>
<feature type="region of interest" description="Disordered" evidence="2">
    <location>
        <begin position="602"/>
        <end position="636"/>
    </location>
</feature>
<feature type="compositionally biased region" description="Acidic residues" evidence="2">
    <location>
        <begin position="620"/>
        <end position="630"/>
    </location>
</feature>
<feature type="modified residue" description="Phosphothreonine; by autocatalysis" evidence="1">
    <location>
        <position position="197"/>
    </location>
</feature>
<name>DNAK_CERS1</name>
<dbReference type="EMBL" id="CP000577">
    <property type="protein sequence ID" value="ABN77937.1"/>
    <property type="molecule type" value="Genomic_DNA"/>
</dbReference>
<dbReference type="RefSeq" id="WP_011841910.1">
    <property type="nucleotide sequence ID" value="NC_009049.1"/>
</dbReference>
<dbReference type="SMR" id="A3PNM1"/>
<dbReference type="KEGG" id="rsh:Rsph17029_2835"/>
<dbReference type="HOGENOM" id="CLU_005965_2_1_5"/>
<dbReference type="GO" id="GO:0005524">
    <property type="term" value="F:ATP binding"/>
    <property type="evidence" value="ECO:0007669"/>
    <property type="project" value="UniProtKB-UniRule"/>
</dbReference>
<dbReference type="GO" id="GO:0140662">
    <property type="term" value="F:ATP-dependent protein folding chaperone"/>
    <property type="evidence" value="ECO:0007669"/>
    <property type="project" value="InterPro"/>
</dbReference>
<dbReference type="GO" id="GO:0051082">
    <property type="term" value="F:unfolded protein binding"/>
    <property type="evidence" value="ECO:0007669"/>
    <property type="project" value="InterPro"/>
</dbReference>
<dbReference type="CDD" id="cd11733">
    <property type="entry name" value="ASKHA_NBD_HSP70_HSPA9"/>
    <property type="match status" value="1"/>
</dbReference>
<dbReference type="FunFam" id="2.60.34.10:FF:000014">
    <property type="entry name" value="Chaperone protein DnaK HSP70"/>
    <property type="match status" value="1"/>
</dbReference>
<dbReference type="FunFam" id="3.30.30.30:FF:000003">
    <property type="entry name" value="Heat shock protein 9"/>
    <property type="match status" value="1"/>
</dbReference>
<dbReference type="FunFam" id="1.20.1270.10:FF:000001">
    <property type="entry name" value="Molecular chaperone DnaK"/>
    <property type="match status" value="1"/>
</dbReference>
<dbReference type="FunFam" id="3.30.420.40:FF:000004">
    <property type="entry name" value="Molecular chaperone DnaK"/>
    <property type="match status" value="1"/>
</dbReference>
<dbReference type="FunFam" id="3.90.640.10:FF:000003">
    <property type="entry name" value="Molecular chaperone DnaK"/>
    <property type="match status" value="1"/>
</dbReference>
<dbReference type="Gene3D" id="1.20.1270.10">
    <property type="match status" value="1"/>
</dbReference>
<dbReference type="Gene3D" id="3.30.420.40">
    <property type="match status" value="2"/>
</dbReference>
<dbReference type="Gene3D" id="3.90.640.10">
    <property type="entry name" value="Actin, Chain A, domain 4"/>
    <property type="match status" value="1"/>
</dbReference>
<dbReference type="Gene3D" id="2.60.34.10">
    <property type="entry name" value="Substrate Binding Domain Of DNAk, Chain A, domain 1"/>
    <property type="match status" value="1"/>
</dbReference>
<dbReference type="HAMAP" id="MF_00332">
    <property type="entry name" value="DnaK"/>
    <property type="match status" value="1"/>
</dbReference>
<dbReference type="InterPro" id="IPR043129">
    <property type="entry name" value="ATPase_NBD"/>
</dbReference>
<dbReference type="InterPro" id="IPR012725">
    <property type="entry name" value="Chaperone_DnaK"/>
</dbReference>
<dbReference type="InterPro" id="IPR018181">
    <property type="entry name" value="Heat_shock_70_CS"/>
</dbReference>
<dbReference type="InterPro" id="IPR029048">
    <property type="entry name" value="HSP70_C_sf"/>
</dbReference>
<dbReference type="InterPro" id="IPR029047">
    <property type="entry name" value="HSP70_peptide-bd_sf"/>
</dbReference>
<dbReference type="InterPro" id="IPR013126">
    <property type="entry name" value="Hsp_70_fam"/>
</dbReference>
<dbReference type="NCBIfam" id="NF001413">
    <property type="entry name" value="PRK00290.1"/>
    <property type="match status" value="1"/>
</dbReference>
<dbReference type="NCBIfam" id="NF003520">
    <property type="entry name" value="PRK05183.1"/>
    <property type="match status" value="1"/>
</dbReference>
<dbReference type="NCBIfam" id="TIGR02350">
    <property type="entry name" value="prok_dnaK"/>
    <property type="match status" value="1"/>
</dbReference>
<dbReference type="PANTHER" id="PTHR19375">
    <property type="entry name" value="HEAT SHOCK PROTEIN 70KDA"/>
    <property type="match status" value="1"/>
</dbReference>
<dbReference type="Pfam" id="PF00012">
    <property type="entry name" value="HSP70"/>
    <property type="match status" value="1"/>
</dbReference>
<dbReference type="PRINTS" id="PR00301">
    <property type="entry name" value="HEATSHOCK70"/>
</dbReference>
<dbReference type="SUPFAM" id="SSF53067">
    <property type="entry name" value="Actin-like ATPase domain"/>
    <property type="match status" value="2"/>
</dbReference>
<dbReference type="SUPFAM" id="SSF100934">
    <property type="entry name" value="Heat shock protein 70kD (HSP70), C-terminal subdomain"/>
    <property type="match status" value="1"/>
</dbReference>
<dbReference type="SUPFAM" id="SSF100920">
    <property type="entry name" value="Heat shock protein 70kD (HSP70), peptide-binding domain"/>
    <property type="match status" value="1"/>
</dbReference>
<dbReference type="PROSITE" id="PS00297">
    <property type="entry name" value="HSP70_1"/>
    <property type="match status" value="1"/>
</dbReference>
<dbReference type="PROSITE" id="PS00329">
    <property type="entry name" value="HSP70_2"/>
    <property type="match status" value="1"/>
</dbReference>
<dbReference type="PROSITE" id="PS01036">
    <property type="entry name" value="HSP70_3"/>
    <property type="match status" value="1"/>
</dbReference>
<proteinExistence type="inferred from homology"/>
<organism>
    <name type="scientific">Cereibacter sphaeroides (strain ATCC 17029 / ATH 2.4.9)</name>
    <name type="common">Rhodobacter sphaeroides</name>
    <dbReference type="NCBI Taxonomy" id="349101"/>
    <lineage>
        <taxon>Bacteria</taxon>
        <taxon>Pseudomonadati</taxon>
        <taxon>Pseudomonadota</taxon>
        <taxon>Alphaproteobacteria</taxon>
        <taxon>Rhodobacterales</taxon>
        <taxon>Paracoccaceae</taxon>
        <taxon>Cereibacter</taxon>
    </lineage>
</organism>